<feature type="chain" id="PRO_0000392994" description="Transcription factor RFX3">
    <location>
        <begin position="1"/>
        <end position="749"/>
    </location>
</feature>
<feature type="DNA-binding region" description="RFX-type winged-helix" evidence="3">
    <location>
        <begin position="183"/>
        <end position="258"/>
    </location>
</feature>
<feature type="region of interest" description="Disordered" evidence="4">
    <location>
        <begin position="663"/>
        <end position="699"/>
    </location>
</feature>
<feature type="compositionally biased region" description="Acidic residues" evidence="4">
    <location>
        <begin position="674"/>
        <end position="688"/>
    </location>
</feature>
<evidence type="ECO:0000250" key="1">
    <source>
        <dbReference type="UniProtKB" id="P48380"/>
    </source>
</evidence>
<evidence type="ECO:0000250" key="2">
    <source>
        <dbReference type="UniProtKB" id="P48381"/>
    </source>
</evidence>
<evidence type="ECO:0000255" key="3">
    <source>
        <dbReference type="PROSITE-ProRule" id="PRU00858"/>
    </source>
</evidence>
<evidence type="ECO:0000256" key="4">
    <source>
        <dbReference type="SAM" id="MobiDB-lite"/>
    </source>
</evidence>
<name>RFX3_MACFA</name>
<reference key="1">
    <citation type="submission" date="2005-06" db="EMBL/GenBank/DDBJ databases">
        <title>DNA sequences of macaque genes expressed in brain or testis and its evolutionary implications.</title>
        <authorList>
            <consortium name="International consortium for macaque cDNA sequencing and analysis"/>
        </authorList>
    </citation>
    <scope>NUCLEOTIDE SEQUENCE [LARGE SCALE MRNA]</scope>
</reference>
<sequence>MQTSETGSDTGSTVTLQTSVASQAAVPTQVVQQVPVQQQVQQVQTVQQVQHVYPAQVQYVEGSDTVYTNGAIRTTTYPYTETQMYSQNTGGNYFDTQGSSAQVTTVVSSHSMVGTGGIQMGVTGGQLISSSGGTYLIGNSMENSGHSVTHTTRASPATIEMAIETLQKSDGLSTHRSSLLNSHLQWLLDNYETAEGVSLPRSTLYDHYLRHCQEHKLDPVNAASFGKLIRSIFMGLRTRRLGTRGNSKYHYYGIRVKPDSPLNRLQEDMQYMAMRQQPMQQKQRYKPMQKVDGVADGFTGSGQQTGTSVEQTVIAQSQHHQQFLDASRALPEFGEVEISSLPDGTTFEDIKSLQSLYREHCEAILDVVVNLQFSLIEKLWQTFWRYSPSTPTDGTTITESSNLSEIESRLPKAKLITLCKHESILKWMCNCDHGMYQALVEILIPDVLRPIPSALTQAIRNFAKSLEGWLSNAMNNIPQRMIQTKVAAVSAFAQTLRRYTSLNHLAQAARAVLQNTSQINQMLNDLNRVDFANVQEQASWVCQCDDNMVQRLETDFKMTLQQQSTLEQWAAWLDNVMMQALKPYEGRPSFPKAARQFLLKWSFYSSMVIRDLTLRSAASFGSFHLIRLLYDEYMFYLVEHRVAQATGETPIAVMGEFGDLNAVSPGNLDKDEGSEVESEMDEELDDSSEPQAKREKTELSQAFPVGCMQPVLETGVQPSLLNPIHSEHIVTSTQTIRQCSATGNTYTAV</sequence>
<proteinExistence type="evidence at transcript level"/>
<gene>
    <name type="primary">RFX3</name>
    <name type="ORF">QtsA-16695</name>
</gene>
<dbReference type="EMBL" id="AB179278">
    <property type="protein sequence ID" value="BAE02329.1"/>
    <property type="molecule type" value="mRNA"/>
</dbReference>
<dbReference type="SMR" id="Q4R3I8"/>
<dbReference type="STRING" id="9541.ENSMFAP00000045394"/>
<dbReference type="eggNOG" id="KOG3712">
    <property type="taxonomic scope" value="Eukaryota"/>
</dbReference>
<dbReference type="Proteomes" id="UP000233100">
    <property type="component" value="Unplaced"/>
</dbReference>
<dbReference type="GO" id="GO:0005576">
    <property type="term" value="C:extracellular region"/>
    <property type="evidence" value="ECO:0007669"/>
    <property type="project" value="GOC"/>
</dbReference>
<dbReference type="GO" id="GO:0005634">
    <property type="term" value="C:nucleus"/>
    <property type="evidence" value="ECO:0007669"/>
    <property type="project" value="UniProtKB-SubCell"/>
</dbReference>
<dbReference type="GO" id="GO:0000981">
    <property type="term" value="F:DNA-binding transcription factor activity, RNA polymerase II-specific"/>
    <property type="evidence" value="ECO:0007669"/>
    <property type="project" value="TreeGrafter"/>
</dbReference>
<dbReference type="GO" id="GO:0000978">
    <property type="term" value="F:RNA polymerase II cis-regulatory region sequence-specific DNA binding"/>
    <property type="evidence" value="ECO:0007669"/>
    <property type="project" value="TreeGrafter"/>
</dbReference>
<dbReference type="GO" id="GO:0000976">
    <property type="term" value="F:transcription cis-regulatory region binding"/>
    <property type="evidence" value="ECO:0000250"/>
    <property type="project" value="UniProtKB"/>
</dbReference>
<dbReference type="GO" id="GO:0030154">
    <property type="term" value="P:cell differentiation"/>
    <property type="evidence" value="ECO:0007669"/>
    <property type="project" value="UniProtKB-KW"/>
</dbReference>
<dbReference type="GO" id="GO:0060285">
    <property type="term" value="P:cilium-dependent cell motility"/>
    <property type="evidence" value="ECO:0000250"/>
    <property type="project" value="UniProtKB"/>
</dbReference>
<dbReference type="GO" id="GO:0006351">
    <property type="term" value="P:DNA-templated transcription"/>
    <property type="evidence" value="ECO:0000250"/>
    <property type="project" value="UniProtKB"/>
</dbReference>
<dbReference type="GO" id="GO:0031018">
    <property type="term" value="P:endocrine pancreas development"/>
    <property type="evidence" value="ECO:0000250"/>
    <property type="project" value="UniProtKB"/>
</dbReference>
<dbReference type="GO" id="GO:0060287">
    <property type="term" value="P:epithelial cilium movement involved in determination of left/right asymmetry"/>
    <property type="evidence" value="ECO:0000250"/>
    <property type="project" value="UniProtKB"/>
</dbReference>
<dbReference type="GO" id="GO:0006355">
    <property type="term" value="P:regulation of DNA-templated transcription"/>
    <property type="evidence" value="ECO:0000250"/>
    <property type="project" value="UniProtKB"/>
</dbReference>
<dbReference type="GO" id="GO:0050796">
    <property type="term" value="P:regulation of insulin secretion"/>
    <property type="evidence" value="ECO:0000250"/>
    <property type="project" value="UniProtKB"/>
</dbReference>
<dbReference type="FunFam" id="1.10.10.10:FF:000017">
    <property type="entry name" value="transcription factor RFX3 isoform X1"/>
    <property type="match status" value="1"/>
</dbReference>
<dbReference type="Gene3D" id="1.10.10.10">
    <property type="entry name" value="Winged helix-like DNA-binding domain superfamily/Winged helix DNA-binding domain"/>
    <property type="match status" value="1"/>
</dbReference>
<dbReference type="InterPro" id="IPR003150">
    <property type="entry name" value="DNA-bd_RFX"/>
</dbReference>
<dbReference type="InterPro" id="IPR039779">
    <property type="entry name" value="RFX-like"/>
</dbReference>
<dbReference type="InterPro" id="IPR007668">
    <property type="entry name" value="RFX1_trans_act"/>
</dbReference>
<dbReference type="InterPro" id="IPR036388">
    <property type="entry name" value="WH-like_DNA-bd_sf"/>
</dbReference>
<dbReference type="InterPro" id="IPR036390">
    <property type="entry name" value="WH_DNA-bd_sf"/>
</dbReference>
<dbReference type="PANTHER" id="PTHR12619">
    <property type="entry name" value="RFX TRANSCRIPTION FACTOR FAMILY"/>
    <property type="match status" value="1"/>
</dbReference>
<dbReference type="PANTHER" id="PTHR12619:SF20">
    <property type="entry name" value="TRANSCRIPTION FACTOR RFX3"/>
    <property type="match status" value="1"/>
</dbReference>
<dbReference type="Pfam" id="PF25340">
    <property type="entry name" value="BCD_RFX"/>
    <property type="match status" value="1"/>
</dbReference>
<dbReference type="Pfam" id="PF04589">
    <property type="entry name" value="RFX1_trans_act"/>
    <property type="match status" value="1"/>
</dbReference>
<dbReference type="Pfam" id="PF02257">
    <property type="entry name" value="RFX_DNA_binding"/>
    <property type="match status" value="1"/>
</dbReference>
<dbReference type="SUPFAM" id="SSF46785">
    <property type="entry name" value="Winged helix' DNA-binding domain"/>
    <property type="match status" value="1"/>
</dbReference>
<dbReference type="PROSITE" id="PS51526">
    <property type="entry name" value="RFX_DBD"/>
    <property type="match status" value="1"/>
</dbReference>
<protein>
    <recommendedName>
        <fullName>Transcription factor RFX3</fullName>
    </recommendedName>
    <alternativeName>
        <fullName>Regulatory factor X 3</fullName>
    </alternativeName>
</protein>
<accession>Q4R3I8</accession>
<keyword id="KW-0217">Developmental protein</keyword>
<keyword id="KW-0221">Differentiation</keyword>
<keyword id="KW-0238">DNA-binding</keyword>
<keyword id="KW-0539">Nucleus</keyword>
<keyword id="KW-1185">Reference proteome</keyword>
<keyword id="KW-0678">Repressor</keyword>
<keyword id="KW-0804">Transcription</keyword>
<keyword id="KW-0805">Transcription regulation</keyword>
<organism>
    <name type="scientific">Macaca fascicularis</name>
    <name type="common">Crab-eating macaque</name>
    <name type="synonym">Cynomolgus monkey</name>
    <dbReference type="NCBI Taxonomy" id="9541"/>
    <lineage>
        <taxon>Eukaryota</taxon>
        <taxon>Metazoa</taxon>
        <taxon>Chordata</taxon>
        <taxon>Craniata</taxon>
        <taxon>Vertebrata</taxon>
        <taxon>Euteleostomi</taxon>
        <taxon>Mammalia</taxon>
        <taxon>Eutheria</taxon>
        <taxon>Euarchontoglires</taxon>
        <taxon>Primates</taxon>
        <taxon>Haplorrhini</taxon>
        <taxon>Catarrhini</taxon>
        <taxon>Cercopithecidae</taxon>
        <taxon>Cercopithecinae</taxon>
        <taxon>Macaca</taxon>
    </lineage>
</organism>
<comment type="function">
    <text evidence="1 2">Transcription factor required for ciliogenesis and islet cell differentiation during endocrine pancreas development. Essential for the differentiation of nodal monocilia and left-right asymmetry specification during embryogenesis. Required for the biogenesis of motile cilia by governing growth and beating efficiency of motile cells. Also required for ciliated ependymal cell differentiation. Regulates the expression of genes involved in ciliary assembly (DYNC2LI1, FOXJ1 and BBS4) and genes involved in ciliary motility (DNAH11, DNAH9 and DNAH5) (By similarity). Together with RFX6, participates in the differentiation of 4 of the 5 islet cell types during endocrine pancreas development, with the exception of pancreatic PP (polypeptide-producing) cells. Regulates transcription by forming a heterodimer with another RFX protein and binding to the X-box in the promoter of target genes. Represses transcription of MAP1A in non-neuronal cells but not in neuronal cells (By similarity).</text>
</comment>
<comment type="subunit">
    <text evidence="1">Heterodimer; heterodimerizes with RFX1 and RFX2, and RFX6.</text>
</comment>
<comment type="subcellular location">
    <subcellularLocation>
        <location evidence="3">Nucleus</location>
    </subcellularLocation>
</comment>
<comment type="similarity">
    <text evidence="3">Belongs to the RFX family.</text>
</comment>